<accession>C0Q162</accession>
<gene>
    <name evidence="1" type="primary">treF</name>
    <name type="ordered locus">SPC_3677</name>
</gene>
<proteinExistence type="inferred from homology"/>
<keyword id="KW-0963">Cytoplasm</keyword>
<keyword id="KW-0326">Glycosidase</keyword>
<keyword id="KW-0378">Hydrolase</keyword>
<dbReference type="EC" id="3.2.1.28" evidence="1"/>
<dbReference type="EMBL" id="CP000857">
    <property type="protein sequence ID" value="ACN47758.1"/>
    <property type="molecule type" value="Genomic_DNA"/>
</dbReference>
<dbReference type="RefSeq" id="WP_000934257.1">
    <property type="nucleotide sequence ID" value="NC_012125.1"/>
</dbReference>
<dbReference type="SMR" id="C0Q162"/>
<dbReference type="CAZy" id="GH37">
    <property type="family name" value="Glycoside Hydrolase Family 37"/>
</dbReference>
<dbReference type="KEGG" id="sei:SPC_3677"/>
<dbReference type="HOGENOM" id="CLU_006451_3_1_6"/>
<dbReference type="UniPathway" id="UPA00300">
    <property type="reaction ID" value="UER00535"/>
</dbReference>
<dbReference type="Proteomes" id="UP000001599">
    <property type="component" value="Chromosome"/>
</dbReference>
<dbReference type="GO" id="GO:0005737">
    <property type="term" value="C:cytoplasm"/>
    <property type="evidence" value="ECO:0007669"/>
    <property type="project" value="UniProtKB-SubCell"/>
</dbReference>
<dbReference type="GO" id="GO:0004555">
    <property type="term" value="F:alpha,alpha-trehalase activity"/>
    <property type="evidence" value="ECO:0007669"/>
    <property type="project" value="UniProtKB-UniRule"/>
</dbReference>
<dbReference type="GO" id="GO:0071474">
    <property type="term" value="P:cellular hyperosmotic response"/>
    <property type="evidence" value="ECO:0007669"/>
    <property type="project" value="InterPro"/>
</dbReference>
<dbReference type="GO" id="GO:0005993">
    <property type="term" value="P:trehalose catabolic process"/>
    <property type="evidence" value="ECO:0007669"/>
    <property type="project" value="UniProtKB-UniRule"/>
</dbReference>
<dbReference type="FunFam" id="1.50.10.10:FF:000003">
    <property type="entry name" value="Cytoplasmic trehalase"/>
    <property type="match status" value="1"/>
</dbReference>
<dbReference type="Gene3D" id="1.50.10.10">
    <property type="match status" value="1"/>
</dbReference>
<dbReference type="HAMAP" id="MF_01059">
    <property type="entry name" value="Cyt_trehalase"/>
    <property type="match status" value="1"/>
</dbReference>
<dbReference type="InterPro" id="IPR008928">
    <property type="entry name" value="6-hairpin_glycosidase_sf"/>
</dbReference>
<dbReference type="InterPro" id="IPR012341">
    <property type="entry name" value="6hp_glycosidase-like_sf"/>
</dbReference>
<dbReference type="InterPro" id="IPR023715">
    <property type="entry name" value="Cyt_trehalase"/>
</dbReference>
<dbReference type="InterPro" id="IPR001661">
    <property type="entry name" value="Glyco_hydro_37"/>
</dbReference>
<dbReference type="InterPro" id="IPR018232">
    <property type="entry name" value="Glyco_hydro_37_CS"/>
</dbReference>
<dbReference type="NCBIfam" id="NF009773">
    <property type="entry name" value="PRK13270.1"/>
    <property type="match status" value="1"/>
</dbReference>
<dbReference type="NCBIfam" id="NF009774">
    <property type="entry name" value="PRK13271.1"/>
    <property type="match status" value="1"/>
</dbReference>
<dbReference type="PANTHER" id="PTHR23403:SF8">
    <property type="entry name" value="CYTOPLASMIC TREHALASE"/>
    <property type="match status" value="1"/>
</dbReference>
<dbReference type="PANTHER" id="PTHR23403">
    <property type="entry name" value="TREHALASE"/>
    <property type="match status" value="1"/>
</dbReference>
<dbReference type="Pfam" id="PF01204">
    <property type="entry name" value="Trehalase"/>
    <property type="match status" value="1"/>
</dbReference>
<dbReference type="PRINTS" id="PR00744">
    <property type="entry name" value="GLHYDRLASE37"/>
</dbReference>
<dbReference type="SUPFAM" id="SSF48208">
    <property type="entry name" value="Six-hairpin glycosidases"/>
    <property type="match status" value="1"/>
</dbReference>
<dbReference type="PROSITE" id="PS00927">
    <property type="entry name" value="TREHALASE_1"/>
    <property type="match status" value="1"/>
</dbReference>
<dbReference type="PROSITE" id="PS00928">
    <property type="entry name" value="TREHALASE_2"/>
    <property type="match status" value="1"/>
</dbReference>
<reference key="1">
    <citation type="journal article" date="2009" name="PLoS ONE">
        <title>Salmonella paratyphi C: genetic divergence from Salmonella choleraesuis and pathogenic convergence with Salmonella typhi.</title>
        <authorList>
            <person name="Liu W.-Q."/>
            <person name="Feng Y."/>
            <person name="Wang Y."/>
            <person name="Zou Q.-H."/>
            <person name="Chen F."/>
            <person name="Guo J.-T."/>
            <person name="Peng Y.-H."/>
            <person name="Jin Y."/>
            <person name="Li Y.-G."/>
            <person name="Hu S.-N."/>
            <person name="Johnston R.N."/>
            <person name="Liu G.-R."/>
            <person name="Liu S.-L."/>
        </authorList>
    </citation>
    <scope>NUCLEOTIDE SEQUENCE [LARGE SCALE GENOMIC DNA]</scope>
    <source>
        <strain>RKS4594</strain>
    </source>
</reference>
<name>TREF_SALPC</name>
<organism>
    <name type="scientific">Salmonella paratyphi C (strain RKS4594)</name>
    <dbReference type="NCBI Taxonomy" id="476213"/>
    <lineage>
        <taxon>Bacteria</taxon>
        <taxon>Pseudomonadati</taxon>
        <taxon>Pseudomonadota</taxon>
        <taxon>Gammaproteobacteria</taxon>
        <taxon>Enterobacterales</taxon>
        <taxon>Enterobacteriaceae</taxon>
        <taxon>Salmonella</taxon>
    </lineage>
</organism>
<comment type="function">
    <text evidence="1">Hydrolyzes trehalose to glucose. Could be involved, in cells returning to low osmolarity conditions, in the utilization of the accumulated cytoplasmic trehalose, which was synthesized in response to high osmolarity.</text>
</comment>
<comment type="catalytic activity">
    <reaction evidence="1">
        <text>alpha,alpha-trehalose + H2O = alpha-D-glucose + beta-D-glucose</text>
        <dbReference type="Rhea" id="RHEA:32675"/>
        <dbReference type="ChEBI" id="CHEBI:15377"/>
        <dbReference type="ChEBI" id="CHEBI:15903"/>
        <dbReference type="ChEBI" id="CHEBI:16551"/>
        <dbReference type="ChEBI" id="CHEBI:17925"/>
        <dbReference type="EC" id="3.2.1.28"/>
    </reaction>
</comment>
<comment type="pathway">
    <text evidence="1">Glycan degradation; trehalose degradation; D-glucose from alpha,alpha-trehalose: step 1/1.</text>
</comment>
<comment type="subunit">
    <text evidence="1">Monomer.</text>
</comment>
<comment type="subcellular location">
    <subcellularLocation>
        <location evidence="1">Cytoplasm</location>
    </subcellularLocation>
</comment>
<comment type="similarity">
    <text evidence="1">Belongs to the glycosyl hydrolase 37 family.</text>
</comment>
<feature type="chain" id="PRO_1000149682" description="Cytoplasmic trehalase">
    <location>
        <begin position="1"/>
        <end position="549"/>
    </location>
</feature>
<feature type="active site" description="Proton donor/acceptor" evidence="1">
    <location>
        <position position="326"/>
    </location>
</feature>
<feature type="active site" description="Proton donor/acceptor" evidence="1">
    <location>
        <position position="509"/>
    </location>
</feature>
<feature type="binding site" evidence="1">
    <location>
        <position position="168"/>
    </location>
    <ligand>
        <name>substrate</name>
    </ligand>
</feature>
<feature type="binding site" evidence="1">
    <location>
        <begin position="175"/>
        <end position="176"/>
    </location>
    <ligand>
        <name>substrate</name>
    </ligand>
</feature>
<feature type="binding site" evidence="1">
    <location>
        <position position="212"/>
    </location>
    <ligand>
        <name>substrate</name>
    </ligand>
</feature>
<feature type="binding site" evidence="1">
    <location>
        <begin position="221"/>
        <end position="223"/>
    </location>
    <ligand>
        <name>substrate</name>
    </ligand>
</feature>
<feature type="binding site" evidence="1">
    <location>
        <begin position="292"/>
        <end position="294"/>
    </location>
    <ligand>
        <name>substrate</name>
    </ligand>
</feature>
<feature type="binding site" evidence="1">
    <location>
        <position position="324"/>
    </location>
    <ligand>
        <name>substrate</name>
    </ligand>
</feature>
<feature type="binding site" evidence="1">
    <location>
        <position position="525"/>
    </location>
    <ligand>
        <name>substrate</name>
    </ligand>
</feature>
<evidence type="ECO:0000255" key="1">
    <source>
        <dbReference type="HAMAP-Rule" id="MF_01059"/>
    </source>
</evidence>
<sequence length="549" mass="63644">MLNQKLNPTPSEDLTIDVDLLYETDPCELKLDEMIEAEPEPEMIEGLPASDALTPADRYLELFEHVQSTKLFPDSKTFPDCAPKMDPLDILIRYRKVRRHRDFDLRRFVENHFWLPETLSSEYVSNPENSLKEHIDQLWPILTREPQDHIPWSSLLALPQSYIVPGGRFSETYYWDSYFTMLGLAESGREDLLKCMADNFAWMIENYGHIPNGNRTYYLSRSQPPVFALMVELFEEDGVRGARRYLDHLKMEYAFWMDGAESLALNQAYRHVVRMPDGSLLNRYWDDRDTPRDESWLEDVETAKHSGRPPNEVYRDLRAGAASGWDYSSRWLRDAGRLASIRTTQFIPIDLNAFLYKLESAIANISALKGERDTEALFRQKASDRRAAVNHYLWDDENGCYRDYDWRREEMALFSAASIVPLYVGMANHEQADRLANVVRSRLLTPGGIMATEYETGEQWDKPNGWAPLQWMAIQGFKRYGDDMLGDEIAHNWLKTVNHFYQEHHKLIEKYHISGGTPREGGGGEYPLQDGFGWTNGVVRRLIGLYGEP</sequence>
<protein>
    <recommendedName>
        <fullName evidence="1">Cytoplasmic trehalase</fullName>
        <ecNumber evidence="1">3.2.1.28</ecNumber>
    </recommendedName>
    <alternativeName>
        <fullName evidence="1">Alpha,alpha-trehalase</fullName>
    </alternativeName>
    <alternativeName>
        <fullName evidence="1">Alpha,alpha-trehalose glucohydrolase</fullName>
    </alternativeName>
</protein>